<evidence type="ECO:0000250" key="1"/>
<evidence type="ECO:0000255" key="2">
    <source>
        <dbReference type="HAMAP-Rule" id="MF_00118"/>
    </source>
</evidence>
<comment type="function">
    <text evidence="2">GTP hydrolase that promotes the GTP-dependent binding of aminoacyl-tRNA to the A-site of ribosomes during protein biosynthesis.</text>
</comment>
<comment type="catalytic activity">
    <reaction evidence="2">
        <text>GTP + H2O = GDP + phosphate + H(+)</text>
        <dbReference type="Rhea" id="RHEA:19669"/>
        <dbReference type="ChEBI" id="CHEBI:15377"/>
        <dbReference type="ChEBI" id="CHEBI:15378"/>
        <dbReference type="ChEBI" id="CHEBI:37565"/>
        <dbReference type="ChEBI" id="CHEBI:43474"/>
        <dbReference type="ChEBI" id="CHEBI:58189"/>
        <dbReference type="EC" id="3.6.5.3"/>
    </reaction>
    <physiologicalReaction direction="left-to-right" evidence="2">
        <dbReference type="Rhea" id="RHEA:19670"/>
    </physiologicalReaction>
</comment>
<comment type="subcellular location">
    <subcellularLocation>
        <location evidence="2">Cytoplasm</location>
    </subcellularLocation>
</comment>
<comment type="similarity">
    <text evidence="2">Belongs to the TRAFAC class translation factor GTPase superfamily. Classic translation factor GTPase family. EF-Tu/EF-1A subfamily.</text>
</comment>
<accession>Q3IUD8</accession>
<keyword id="KW-0963">Cytoplasm</keyword>
<keyword id="KW-0251">Elongation factor</keyword>
<keyword id="KW-0342">GTP-binding</keyword>
<keyword id="KW-0378">Hydrolase</keyword>
<keyword id="KW-0460">Magnesium</keyword>
<keyword id="KW-0479">Metal-binding</keyword>
<keyword id="KW-0547">Nucleotide-binding</keyword>
<keyword id="KW-0648">Protein biosynthesis</keyword>
<keyword id="KW-1185">Reference proteome</keyword>
<protein>
    <recommendedName>
        <fullName evidence="2">Elongation factor 1-alpha</fullName>
        <shortName evidence="2">EF-1-alpha</shortName>
        <ecNumber evidence="2">3.6.5.3</ecNumber>
    </recommendedName>
    <alternativeName>
        <fullName evidence="2">Elongation factor Tu</fullName>
        <shortName evidence="2">EF-Tu</shortName>
    </alternativeName>
</protein>
<gene>
    <name evidence="2" type="primary">tuf</name>
    <name type="ordered locus">NP_0304A</name>
</gene>
<proteinExistence type="inferred from homology"/>
<dbReference type="EC" id="3.6.5.3" evidence="2"/>
<dbReference type="EMBL" id="CR936257">
    <property type="protein sequence ID" value="CAI48243.1"/>
    <property type="molecule type" value="Genomic_DNA"/>
</dbReference>
<dbReference type="RefSeq" id="WP_011321881.1">
    <property type="nucleotide sequence ID" value="NC_007426.1"/>
</dbReference>
<dbReference type="SMR" id="Q3IUD8"/>
<dbReference type="STRING" id="348780.NP_0304A"/>
<dbReference type="EnsemblBacteria" id="CAI48243">
    <property type="protein sequence ID" value="CAI48243"/>
    <property type="gene ID" value="NP_0304A"/>
</dbReference>
<dbReference type="GeneID" id="3703230"/>
<dbReference type="KEGG" id="nph:NP_0304A"/>
<dbReference type="eggNOG" id="arCOG01561">
    <property type="taxonomic scope" value="Archaea"/>
</dbReference>
<dbReference type="HOGENOM" id="CLU_007265_0_0_2"/>
<dbReference type="OrthoDB" id="371718at2157"/>
<dbReference type="Proteomes" id="UP000002698">
    <property type="component" value="Chromosome"/>
</dbReference>
<dbReference type="GO" id="GO:0005737">
    <property type="term" value="C:cytoplasm"/>
    <property type="evidence" value="ECO:0007669"/>
    <property type="project" value="UniProtKB-SubCell"/>
</dbReference>
<dbReference type="GO" id="GO:0005525">
    <property type="term" value="F:GTP binding"/>
    <property type="evidence" value="ECO:0007669"/>
    <property type="project" value="UniProtKB-UniRule"/>
</dbReference>
<dbReference type="GO" id="GO:0003924">
    <property type="term" value="F:GTPase activity"/>
    <property type="evidence" value="ECO:0007669"/>
    <property type="project" value="InterPro"/>
</dbReference>
<dbReference type="GO" id="GO:0003746">
    <property type="term" value="F:translation elongation factor activity"/>
    <property type="evidence" value="ECO:0007669"/>
    <property type="project" value="UniProtKB-UniRule"/>
</dbReference>
<dbReference type="CDD" id="cd01883">
    <property type="entry name" value="EF1_alpha"/>
    <property type="match status" value="1"/>
</dbReference>
<dbReference type="CDD" id="cd03693">
    <property type="entry name" value="EF1_alpha_II"/>
    <property type="match status" value="1"/>
</dbReference>
<dbReference type="CDD" id="cd03705">
    <property type="entry name" value="EF1_alpha_III"/>
    <property type="match status" value="1"/>
</dbReference>
<dbReference type="FunFam" id="2.40.30.10:FF:000003">
    <property type="entry name" value="Elongation factor 1-alpha"/>
    <property type="match status" value="1"/>
</dbReference>
<dbReference type="FunFam" id="2.40.30.10:FF:000005">
    <property type="entry name" value="Elongation factor 1-alpha"/>
    <property type="match status" value="1"/>
</dbReference>
<dbReference type="Gene3D" id="3.40.50.300">
    <property type="entry name" value="P-loop containing nucleotide triphosphate hydrolases"/>
    <property type="match status" value="1"/>
</dbReference>
<dbReference type="Gene3D" id="2.40.30.10">
    <property type="entry name" value="Translation factors"/>
    <property type="match status" value="2"/>
</dbReference>
<dbReference type="HAMAP" id="MF_00118_A">
    <property type="entry name" value="EF_Tu_A"/>
    <property type="match status" value="1"/>
</dbReference>
<dbReference type="InterPro" id="IPR004161">
    <property type="entry name" value="EFTu-like_2"/>
</dbReference>
<dbReference type="InterPro" id="IPR031157">
    <property type="entry name" value="G_TR_CS"/>
</dbReference>
<dbReference type="InterPro" id="IPR054696">
    <property type="entry name" value="GTP-eEF1A_C"/>
</dbReference>
<dbReference type="InterPro" id="IPR027417">
    <property type="entry name" value="P-loop_NTPase"/>
</dbReference>
<dbReference type="InterPro" id="IPR005225">
    <property type="entry name" value="Small_GTP-bd"/>
</dbReference>
<dbReference type="InterPro" id="IPR000795">
    <property type="entry name" value="T_Tr_GTP-bd_dom"/>
</dbReference>
<dbReference type="InterPro" id="IPR050100">
    <property type="entry name" value="TRAFAC_GTPase_members"/>
</dbReference>
<dbReference type="InterPro" id="IPR009000">
    <property type="entry name" value="Transl_B-barrel_sf"/>
</dbReference>
<dbReference type="InterPro" id="IPR009001">
    <property type="entry name" value="Transl_elong_EF1A/Init_IF2_C"/>
</dbReference>
<dbReference type="InterPro" id="IPR004539">
    <property type="entry name" value="Transl_elong_EF1A_euk/arc"/>
</dbReference>
<dbReference type="NCBIfam" id="TIGR00483">
    <property type="entry name" value="EF-1_alpha"/>
    <property type="match status" value="1"/>
</dbReference>
<dbReference type="NCBIfam" id="NF008969">
    <property type="entry name" value="PRK12317.1"/>
    <property type="match status" value="1"/>
</dbReference>
<dbReference type="NCBIfam" id="TIGR00231">
    <property type="entry name" value="small_GTP"/>
    <property type="match status" value="1"/>
</dbReference>
<dbReference type="PANTHER" id="PTHR23115">
    <property type="entry name" value="TRANSLATION FACTOR"/>
    <property type="match status" value="1"/>
</dbReference>
<dbReference type="Pfam" id="PF22594">
    <property type="entry name" value="GTP-eEF1A_C"/>
    <property type="match status" value="1"/>
</dbReference>
<dbReference type="Pfam" id="PF00009">
    <property type="entry name" value="GTP_EFTU"/>
    <property type="match status" value="1"/>
</dbReference>
<dbReference type="Pfam" id="PF03144">
    <property type="entry name" value="GTP_EFTU_D2"/>
    <property type="match status" value="1"/>
</dbReference>
<dbReference type="PRINTS" id="PR00315">
    <property type="entry name" value="ELONGATNFCT"/>
</dbReference>
<dbReference type="SUPFAM" id="SSF50465">
    <property type="entry name" value="EF-Tu/eEF-1alpha/eIF2-gamma C-terminal domain"/>
    <property type="match status" value="1"/>
</dbReference>
<dbReference type="SUPFAM" id="SSF52540">
    <property type="entry name" value="P-loop containing nucleoside triphosphate hydrolases"/>
    <property type="match status" value="1"/>
</dbReference>
<dbReference type="SUPFAM" id="SSF50447">
    <property type="entry name" value="Translation proteins"/>
    <property type="match status" value="1"/>
</dbReference>
<dbReference type="PROSITE" id="PS00301">
    <property type="entry name" value="G_TR_1"/>
    <property type="match status" value="1"/>
</dbReference>
<dbReference type="PROSITE" id="PS51722">
    <property type="entry name" value="G_TR_2"/>
    <property type="match status" value="1"/>
</dbReference>
<feature type="chain" id="PRO_1000015710" description="Elongation factor 1-alpha">
    <location>
        <begin position="1"/>
        <end position="422"/>
    </location>
</feature>
<feature type="domain" description="tr-type G">
    <location>
        <begin position="5"/>
        <end position="221"/>
    </location>
</feature>
<feature type="region of interest" description="G1" evidence="1">
    <location>
        <begin position="14"/>
        <end position="21"/>
    </location>
</feature>
<feature type="region of interest" description="G2" evidence="1">
    <location>
        <begin position="70"/>
        <end position="74"/>
    </location>
</feature>
<feature type="region of interest" description="G3" evidence="1">
    <location>
        <begin position="91"/>
        <end position="94"/>
    </location>
</feature>
<feature type="region of interest" description="G4" evidence="1">
    <location>
        <begin position="146"/>
        <end position="149"/>
    </location>
</feature>
<feature type="region of interest" description="G5" evidence="1">
    <location>
        <begin position="185"/>
        <end position="187"/>
    </location>
</feature>
<feature type="binding site" evidence="2">
    <location>
        <begin position="14"/>
        <end position="21"/>
    </location>
    <ligand>
        <name>GTP</name>
        <dbReference type="ChEBI" id="CHEBI:37565"/>
    </ligand>
</feature>
<feature type="binding site" evidence="2">
    <location>
        <position position="21"/>
    </location>
    <ligand>
        <name>Mg(2+)</name>
        <dbReference type="ChEBI" id="CHEBI:18420"/>
    </ligand>
</feature>
<feature type="binding site" evidence="2">
    <location>
        <begin position="91"/>
        <end position="95"/>
    </location>
    <ligand>
        <name>GTP</name>
        <dbReference type="ChEBI" id="CHEBI:37565"/>
    </ligand>
</feature>
<feature type="binding site" evidence="2">
    <location>
        <begin position="146"/>
        <end position="149"/>
    </location>
    <ligand>
        <name>GTP</name>
        <dbReference type="ChEBI" id="CHEBI:37565"/>
    </ligand>
</feature>
<reference key="1">
    <citation type="journal article" date="2005" name="Genome Res.">
        <title>Living with two extremes: conclusions from the genome sequence of Natronomonas pharaonis.</title>
        <authorList>
            <person name="Falb M."/>
            <person name="Pfeiffer F."/>
            <person name="Palm P."/>
            <person name="Rodewald K."/>
            <person name="Hickmann V."/>
            <person name="Tittor J."/>
            <person name="Oesterhelt D."/>
        </authorList>
    </citation>
    <scope>NUCLEOTIDE SEQUENCE [LARGE SCALE GENOMIC DNA]</scope>
    <source>
        <strain>ATCC 35678 / DSM 2160 / CIP 103997 / JCM 8858 / NBRC 14720 / NCIMB 2260 / Gabara</strain>
    </source>
</reference>
<organism>
    <name type="scientific">Natronomonas pharaonis (strain ATCC 35678 / DSM 2160 / CIP 103997 / JCM 8858 / NBRC 14720 / NCIMB 2260 / Gabara)</name>
    <name type="common">Halobacterium pharaonis</name>
    <dbReference type="NCBI Taxonomy" id="348780"/>
    <lineage>
        <taxon>Archaea</taxon>
        <taxon>Methanobacteriati</taxon>
        <taxon>Methanobacteriota</taxon>
        <taxon>Stenosarchaea group</taxon>
        <taxon>Halobacteria</taxon>
        <taxon>Halobacteriales</taxon>
        <taxon>Haloarculaceae</taxon>
        <taxon>Natronomonas</taxon>
    </lineage>
</organism>
<name>EF1A_NATPD</name>
<sequence>MSEDKPHQNLAVIGHVDHGKSTMVGRLLFETGSVPEHVIEQYREEAEEKGKGGFEFAYVMDNLAEERERGVTIDIAHQEFDTDEYYFTIVDCPGHRDFVKNMITGASQADNAVLVVAADDGVQPQTQEHVFLARTLGIDELIIAVNKMDLVDYDENKYKAVVDEVNQLLEQVRFNTEDAKFIPTSAFEGDNVSEASENTSWYDGPSLLEALNDLPEPQPPTDAPLRLPIQDVYTISGIGTVPVGRVETGILNTGDNVSFQPSDVSGEVKTVEMHHEEVPKAEPGDNVGFNVRGVGKDDIRRGDVCGPADDPPSVAETFQAQVVVMQHPSVITAGYTPVFHAHTAQVACTIESIDKKIDPSSGEVAEENPDFIQSGDAAVVTVRPQKPLSIESSNEIPELGSFAIRDMGQTVAAGKVLSVNER</sequence>